<name>TRNH4_ARATH</name>
<dbReference type="EC" id="1.1.1.-" evidence="3"/>
<dbReference type="EMBL" id="AC004561">
    <property type="protein sequence ID" value="AAC95218.1"/>
    <property type="molecule type" value="Genomic_DNA"/>
</dbReference>
<dbReference type="EMBL" id="CP002685">
    <property type="protein sequence ID" value="AEC08218.1"/>
    <property type="status" value="ALT_SEQ"/>
    <property type="molecule type" value="Genomic_DNA"/>
</dbReference>
<dbReference type="PIR" id="C84693">
    <property type="entry name" value="C84693"/>
</dbReference>
<dbReference type="RefSeq" id="NP_180480.2">
    <property type="nucleotide sequence ID" value="NM_128473.4"/>
</dbReference>
<dbReference type="SMR" id="Q9ZW04"/>
<dbReference type="FunCoup" id="Q9ZW04">
    <property type="interactions" value="8"/>
</dbReference>
<dbReference type="STRING" id="3702.Q9ZW04"/>
<dbReference type="PaxDb" id="3702-AT2G29170.1"/>
<dbReference type="GeneID" id="817466"/>
<dbReference type="KEGG" id="ath:AT2G29170"/>
<dbReference type="Araport" id="AT2G29170"/>
<dbReference type="TAIR" id="AT2G29170"/>
<dbReference type="InParanoid" id="Q9ZW04"/>
<dbReference type="PRO" id="PR:Q9ZW04"/>
<dbReference type="Proteomes" id="UP000006548">
    <property type="component" value="Chromosome 2"/>
</dbReference>
<dbReference type="ExpressionAtlas" id="Q9ZW04">
    <property type="expression patterns" value="baseline and differential"/>
</dbReference>
<dbReference type="GO" id="GO:0016491">
    <property type="term" value="F:oxidoreductase activity"/>
    <property type="evidence" value="ECO:0007669"/>
    <property type="project" value="UniProtKB-KW"/>
</dbReference>
<dbReference type="FunFam" id="3.40.50.720:FF:000084">
    <property type="entry name" value="Short-chain dehydrogenase reductase"/>
    <property type="match status" value="1"/>
</dbReference>
<dbReference type="Gene3D" id="3.40.50.720">
    <property type="entry name" value="NAD(P)-binding Rossmann-like Domain"/>
    <property type="match status" value="1"/>
</dbReference>
<dbReference type="InterPro" id="IPR036291">
    <property type="entry name" value="NAD(P)-bd_dom_sf"/>
</dbReference>
<dbReference type="InterPro" id="IPR020904">
    <property type="entry name" value="Sc_DH/Rdtase_CS"/>
</dbReference>
<dbReference type="InterPro" id="IPR002347">
    <property type="entry name" value="SDR_fam"/>
</dbReference>
<dbReference type="InterPro" id="IPR045000">
    <property type="entry name" value="TR"/>
</dbReference>
<dbReference type="PANTHER" id="PTHR42898:SF94">
    <property type="entry name" value="3-OXOACYL-[ACYL-CARRIER-PROTEIN] REDUCTASE"/>
    <property type="match status" value="1"/>
</dbReference>
<dbReference type="PANTHER" id="PTHR42898">
    <property type="entry name" value="TROPINONE REDUCTASE"/>
    <property type="match status" value="1"/>
</dbReference>
<dbReference type="Pfam" id="PF13561">
    <property type="entry name" value="adh_short_C2"/>
    <property type="match status" value="1"/>
</dbReference>
<dbReference type="PRINTS" id="PR00081">
    <property type="entry name" value="GDHRDH"/>
</dbReference>
<dbReference type="PRINTS" id="PR00080">
    <property type="entry name" value="SDRFAMILY"/>
</dbReference>
<dbReference type="SUPFAM" id="SSF51735">
    <property type="entry name" value="NAD(P)-binding Rossmann-fold domains"/>
    <property type="match status" value="1"/>
</dbReference>
<dbReference type="PROSITE" id="PS00061">
    <property type="entry name" value="ADH_SHORT"/>
    <property type="match status" value="1"/>
</dbReference>
<reference key="1">
    <citation type="journal article" date="1999" name="Nature">
        <title>Sequence and analysis of chromosome 2 of the plant Arabidopsis thaliana.</title>
        <authorList>
            <person name="Lin X."/>
            <person name="Kaul S."/>
            <person name="Rounsley S.D."/>
            <person name="Shea T.P."/>
            <person name="Benito M.-I."/>
            <person name="Town C.D."/>
            <person name="Fujii C.Y."/>
            <person name="Mason T.M."/>
            <person name="Bowman C.L."/>
            <person name="Barnstead M.E."/>
            <person name="Feldblyum T.V."/>
            <person name="Buell C.R."/>
            <person name="Ketchum K.A."/>
            <person name="Lee J.J."/>
            <person name="Ronning C.M."/>
            <person name="Koo H.L."/>
            <person name="Moffat K.S."/>
            <person name="Cronin L.A."/>
            <person name="Shen M."/>
            <person name="Pai G."/>
            <person name="Van Aken S."/>
            <person name="Umayam L."/>
            <person name="Tallon L.J."/>
            <person name="Gill J.E."/>
            <person name="Adams M.D."/>
            <person name="Carrera A.J."/>
            <person name="Creasy T.H."/>
            <person name="Goodman H.M."/>
            <person name="Somerville C.R."/>
            <person name="Copenhaver G.P."/>
            <person name="Preuss D."/>
            <person name="Nierman W.C."/>
            <person name="White O."/>
            <person name="Eisen J.A."/>
            <person name="Salzberg S.L."/>
            <person name="Fraser C.M."/>
            <person name="Venter J.C."/>
        </authorList>
    </citation>
    <scope>NUCLEOTIDE SEQUENCE [LARGE SCALE GENOMIC DNA]</scope>
    <source>
        <strain>cv. Columbia</strain>
    </source>
</reference>
<reference key="2">
    <citation type="journal article" date="2017" name="Plant J.">
        <title>Araport11: a complete reannotation of the Arabidopsis thaliana reference genome.</title>
        <authorList>
            <person name="Cheng C.Y."/>
            <person name="Krishnakumar V."/>
            <person name="Chan A.P."/>
            <person name="Thibaud-Nissen F."/>
            <person name="Schobel S."/>
            <person name="Town C.D."/>
        </authorList>
    </citation>
    <scope>GENOME REANNOTATION</scope>
    <source>
        <strain evidence="5">cv. Columbia</strain>
    </source>
</reference>
<reference key="3">
    <citation type="journal article" date="2009" name="Chem. Biol. Interact.">
        <title>The SDR (short-chain dehydrogenase/reductase and related enzymes) nomenclature initiative.</title>
        <authorList>
            <person name="Persson B."/>
            <person name="Kallberg Y."/>
            <person name="Bray J.E."/>
            <person name="Bruford E."/>
            <person name="Dellaporta S.L."/>
            <person name="Favia A.D."/>
            <person name="Duarte R.G."/>
            <person name="Joernvall H."/>
            <person name="Kavanagh K.L."/>
            <person name="Kedishvili N."/>
            <person name="Kisiela M."/>
            <person name="Maser E."/>
            <person name="Mindnich R."/>
            <person name="Orchard S."/>
            <person name="Penning T.M."/>
            <person name="Thornton J.M."/>
            <person name="Adamski J."/>
            <person name="Oppermann U."/>
        </authorList>
    </citation>
    <scope>GENE FAMILY</scope>
    <scope>NOMENCLATURE</scope>
</reference>
<organism evidence="5">
    <name type="scientific">Arabidopsis thaliana</name>
    <name type="common">Mouse-ear cress</name>
    <dbReference type="NCBI Taxonomy" id="3702"/>
    <lineage>
        <taxon>Eukaryota</taxon>
        <taxon>Viridiplantae</taxon>
        <taxon>Streptophyta</taxon>
        <taxon>Embryophyta</taxon>
        <taxon>Tracheophyta</taxon>
        <taxon>Spermatophyta</taxon>
        <taxon>Magnoliopsida</taxon>
        <taxon>eudicotyledons</taxon>
        <taxon>Gunneridae</taxon>
        <taxon>Pentapetalae</taxon>
        <taxon>rosids</taxon>
        <taxon>malvids</taxon>
        <taxon>Brassicales</taxon>
        <taxon>Brassicaceae</taxon>
        <taxon>Camelineae</taxon>
        <taxon>Arabidopsis</taxon>
    </lineage>
</organism>
<keyword id="KW-0521">NADP</keyword>
<keyword id="KW-0560">Oxidoreductase</keyword>
<keyword id="KW-1185">Reference proteome</keyword>
<gene>
    <name evidence="4" type="ordered locus">At2g29170</name>
    <name evidence="4" type="ORF">F16P2</name>
</gene>
<evidence type="ECO:0000250" key="1">
    <source>
        <dbReference type="UniProtKB" id="P50162"/>
    </source>
</evidence>
<evidence type="ECO:0000255" key="2">
    <source>
        <dbReference type="PROSITE-ProRule" id="PRU10001"/>
    </source>
</evidence>
<evidence type="ECO:0000305" key="3"/>
<evidence type="ECO:0000312" key="4">
    <source>
        <dbReference type="EMBL" id="AAC95218.1"/>
    </source>
</evidence>
<evidence type="ECO:0000312" key="5">
    <source>
        <dbReference type="Proteomes" id="UP000006548"/>
    </source>
</evidence>
<accession>Q9ZW04</accession>
<accession>F4IJR7</accession>
<protein>
    <recommendedName>
        <fullName evidence="3">Tropinone reductase homolog At2g29170</fullName>
        <ecNumber evidence="3">1.1.1.-</ecNumber>
    </recommendedName>
</protein>
<comment type="similarity">
    <text evidence="3">Belongs to the short-chain dehydrogenases/reductases (SDR) family. SDR65C subfamily.</text>
</comment>
<comment type="sequence caution" evidence="3">
    <conflict type="erroneous gene model prediction">
        <sequence resource="EMBL-CDS" id="AEC08218"/>
    </conflict>
</comment>
<proteinExistence type="inferred from homology"/>
<sequence>MAKAEENLRDKCRWSLGGMTALVTGGSKGLGEAVVEELAMLGARVHTCARNETQLQECVREWQAKGFEVTTSVCDVSSRDQREKLMENVASIFQGKLNILVNNAGTGITKPTTEYTAQDYSFLMATNLDSAFHLSQLAHPLLKASGSGSIVLMSSTAGVVHINVGSIYGATKGAMNQLAKNLACEWARDNIRVNSVCPWFIATPLYLNDEELKKEVERKTPMGRVGNANEVSSLVAFLCFPAASYITGQTICVDGGFTVNCFSFKPVL</sequence>
<feature type="chain" id="PRO_0000432359" description="Tropinone reductase homolog At2g29170">
    <location>
        <begin position="1"/>
        <end position="268"/>
    </location>
</feature>
<feature type="active site" description="Proton acceptor" evidence="2">
    <location>
        <position position="168"/>
    </location>
</feature>
<feature type="binding site" evidence="1">
    <location>
        <begin position="22"/>
        <end position="46"/>
    </location>
    <ligand>
        <name>NADP(+)</name>
        <dbReference type="ChEBI" id="CHEBI:58349"/>
    </ligand>
</feature>
<feature type="binding site" evidence="1">
    <location>
        <position position="155"/>
    </location>
    <ligand>
        <name>substrate</name>
    </ligand>
</feature>